<evidence type="ECO:0000250" key="1"/>
<evidence type="ECO:0000255" key="2">
    <source>
        <dbReference type="PROSITE-ProRule" id="PRU01330"/>
    </source>
</evidence>
<evidence type="ECO:0000255" key="3">
    <source>
        <dbReference type="PROSITE-ProRule" id="PRU01331"/>
    </source>
</evidence>
<evidence type="ECO:0000305" key="4"/>
<dbReference type="EC" id="6.3.1.2"/>
<dbReference type="EMBL" id="Y12704">
    <property type="protein sequence ID" value="CAA73235.1"/>
    <property type="molecule type" value="Genomic_DNA"/>
</dbReference>
<dbReference type="SMR" id="O00088"/>
<dbReference type="GO" id="GO:0005737">
    <property type="term" value="C:cytoplasm"/>
    <property type="evidence" value="ECO:0007669"/>
    <property type="project" value="UniProtKB-SubCell"/>
</dbReference>
<dbReference type="GO" id="GO:0005524">
    <property type="term" value="F:ATP binding"/>
    <property type="evidence" value="ECO:0007669"/>
    <property type="project" value="UniProtKB-KW"/>
</dbReference>
<dbReference type="GO" id="GO:0004356">
    <property type="term" value="F:glutamine synthetase activity"/>
    <property type="evidence" value="ECO:0007669"/>
    <property type="project" value="UniProtKB-EC"/>
</dbReference>
<dbReference type="GO" id="GO:0006542">
    <property type="term" value="P:glutamine biosynthetic process"/>
    <property type="evidence" value="ECO:0007669"/>
    <property type="project" value="InterPro"/>
</dbReference>
<dbReference type="FunFam" id="3.10.20.70:FF:000004">
    <property type="entry name" value="Glutamine synthetase"/>
    <property type="match status" value="1"/>
</dbReference>
<dbReference type="FunFam" id="3.30.590.10:FF:000004">
    <property type="entry name" value="Glutamine synthetase"/>
    <property type="match status" value="1"/>
</dbReference>
<dbReference type="Gene3D" id="3.10.20.70">
    <property type="entry name" value="Glutamine synthetase, N-terminal domain"/>
    <property type="match status" value="1"/>
</dbReference>
<dbReference type="Gene3D" id="3.30.590.10">
    <property type="entry name" value="Glutamine synthetase/guanido kinase, catalytic domain"/>
    <property type="match status" value="1"/>
</dbReference>
<dbReference type="InterPro" id="IPR008147">
    <property type="entry name" value="Gln_synt_N"/>
</dbReference>
<dbReference type="InterPro" id="IPR036651">
    <property type="entry name" value="Gln_synt_N_sf"/>
</dbReference>
<dbReference type="InterPro" id="IPR014746">
    <property type="entry name" value="Gln_synth/guanido_kin_cat_dom"/>
</dbReference>
<dbReference type="InterPro" id="IPR008146">
    <property type="entry name" value="Gln_synth_cat_dom"/>
</dbReference>
<dbReference type="InterPro" id="IPR027303">
    <property type="entry name" value="Gln_synth_gly_rich_site"/>
</dbReference>
<dbReference type="InterPro" id="IPR027302">
    <property type="entry name" value="Gln_synth_N_conserv_site"/>
</dbReference>
<dbReference type="InterPro" id="IPR050292">
    <property type="entry name" value="Glutamine_Synthetase"/>
</dbReference>
<dbReference type="PANTHER" id="PTHR20852">
    <property type="entry name" value="GLUTAMINE SYNTHETASE"/>
    <property type="match status" value="1"/>
</dbReference>
<dbReference type="PANTHER" id="PTHR20852:SF57">
    <property type="entry name" value="GLUTAMINE SYNTHETASE 2 CYTOPLASMIC"/>
    <property type="match status" value="1"/>
</dbReference>
<dbReference type="Pfam" id="PF00120">
    <property type="entry name" value="Gln-synt_C"/>
    <property type="match status" value="1"/>
</dbReference>
<dbReference type="Pfam" id="PF03951">
    <property type="entry name" value="Gln-synt_N"/>
    <property type="match status" value="1"/>
</dbReference>
<dbReference type="SMART" id="SM01230">
    <property type="entry name" value="Gln-synt_C"/>
    <property type="match status" value="1"/>
</dbReference>
<dbReference type="SUPFAM" id="SSF54368">
    <property type="entry name" value="Glutamine synthetase, N-terminal domain"/>
    <property type="match status" value="1"/>
</dbReference>
<dbReference type="SUPFAM" id="SSF55931">
    <property type="entry name" value="Glutamine synthetase/guanido kinase"/>
    <property type="match status" value="1"/>
</dbReference>
<dbReference type="PROSITE" id="PS00180">
    <property type="entry name" value="GLNA_1"/>
    <property type="match status" value="1"/>
</dbReference>
<dbReference type="PROSITE" id="PS00181">
    <property type="entry name" value="GLNA_ATP"/>
    <property type="match status" value="1"/>
</dbReference>
<dbReference type="PROSITE" id="PS51986">
    <property type="entry name" value="GS_BETA_GRASP"/>
    <property type="match status" value="1"/>
</dbReference>
<dbReference type="PROSITE" id="PS51987">
    <property type="entry name" value="GS_CATALYTIC"/>
    <property type="match status" value="1"/>
</dbReference>
<name>GLNA_AGABI</name>
<accession>O00088</accession>
<keyword id="KW-0067">ATP-binding</keyword>
<keyword id="KW-0963">Cytoplasm</keyword>
<keyword id="KW-0436">Ligase</keyword>
<keyword id="KW-0547">Nucleotide-binding</keyword>
<proteinExistence type="inferred from homology"/>
<reference key="1">
    <citation type="journal article" date="1997" name="Mol. Gen. Genet.">
        <title>Molecular characterization of the glnA gene encoding glutamine synthetase from the edible mushroom Agaricus bisporus.</title>
        <authorList>
            <person name="Kersten M.A.S.H."/>
            <person name="Mueller Y."/>
            <person name="Op den Camp H.J.M."/>
            <person name="Vogels G.D."/>
            <person name="van Griensven L.J.L.D."/>
            <person name="Visser J."/>
            <person name="Schaap P.J."/>
        </authorList>
    </citation>
    <scope>NUCLEOTIDE SEQUENCE [GENOMIC DNA]</scope>
    <source>
        <strain>Horst H39</strain>
    </source>
</reference>
<sequence>MANTYHNDLLAPYLSLDQGDKIQAEYVWIDGDGGLRCKTTTVSKKVTDIGQLRIWDFDGSSTNQAPGHDSDVYLRPAAIFKDPFRGGDNILVLAETYNNDGTPNRTNHRHHAKKVFDEAKEHEPWFGLEQEYTLFDADDQPYGWPKGGFPGPQGPYYCGAGTGKVFARDLIEAHYRACLYAGINISGINAEVMPSQWEFQVGPCEGISMGDHLWMARYLLVRIAEQWGVKVSFHPKPLKGEWNGAGCHTNFSTKAMREAGGMKFIEDAIEKLAKRHDEHIAVYGEDNDLRLTGRHETGHISNFSSGVANRGASIRVPRHVASQGYGYLEDRRPASNIDPYRVTSIIAETTILDK</sequence>
<comment type="catalytic activity">
    <reaction>
        <text>L-glutamate + NH4(+) + ATP = L-glutamine + ADP + phosphate + H(+)</text>
        <dbReference type="Rhea" id="RHEA:16169"/>
        <dbReference type="ChEBI" id="CHEBI:15378"/>
        <dbReference type="ChEBI" id="CHEBI:28938"/>
        <dbReference type="ChEBI" id="CHEBI:29985"/>
        <dbReference type="ChEBI" id="CHEBI:30616"/>
        <dbReference type="ChEBI" id="CHEBI:43474"/>
        <dbReference type="ChEBI" id="CHEBI:58359"/>
        <dbReference type="ChEBI" id="CHEBI:456216"/>
        <dbReference type="EC" id="6.3.1.2"/>
    </reaction>
</comment>
<comment type="subunit">
    <text evidence="1">Homooctamer.</text>
</comment>
<comment type="subcellular location">
    <subcellularLocation>
        <location>Cytoplasm</location>
    </subcellularLocation>
</comment>
<comment type="similarity">
    <text evidence="4">Belongs to the glutamine synthetase family.</text>
</comment>
<protein>
    <recommendedName>
        <fullName>Glutamine synthetase</fullName>
        <shortName>GS</shortName>
        <ecNumber>6.3.1.2</ecNumber>
    </recommendedName>
    <alternativeName>
        <fullName>Glutamate--ammonia ligase</fullName>
    </alternativeName>
</protein>
<feature type="chain" id="PRO_0000153149" description="Glutamine synthetase">
    <location>
        <begin position="1"/>
        <end position="354"/>
    </location>
</feature>
<feature type="domain" description="GS beta-grasp" evidence="2">
    <location>
        <begin position="22"/>
        <end position="101"/>
    </location>
</feature>
<feature type="domain" description="GS catalytic" evidence="3">
    <location>
        <begin position="108"/>
        <end position="354"/>
    </location>
</feature>
<gene>
    <name type="primary">glnA</name>
</gene>
<organism>
    <name type="scientific">Agaricus bisporus</name>
    <name type="common">White button mushroom</name>
    <dbReference type="NCBI Taxonomy" id="5341"/>
    <lineage>
        <taxon>Eukaryota</taxon>
        <taxon>Fungi</taxon>
        <taxon>Dikarya</taxon>
        <taxon>Basidiomycota</taxon>
        <taxon>Agaricomycotina</taxon>
        <taxon>Agaricomycetes</taxon>
        <taxon>Agaricomycetidae</taxon>
        <taxon>Agaricales</taxon>
        <taxon>Agaricineae</taxon>
        <taxon>Agaricaceae</taxon>
        <taxon>Agaricus</taxon>
    </lineage>
</organism>